<sequence>MRKYIFIILIAVLLIGVNIKKIAAAANIDRHTNSTLGIDLSVGIPIFYNDLSKAYPTNLYPGGIGAIKYQYHILNNLAIGLELRYMFNFDINHSFNILNPDSSVGKIFYSVPITFSINYIFDIGELFQIPVFTNIGFSLNTYGDRNNNITNLRTFDALPTISFGSGILWNFNYKWAFGATASWWMMFEFGNSAKMAHFALVSLSVTVNVNKL</sequence>
<keyword id="KW-0472">Membrane</keyword>
<keyword id="KW-1185">Reference proteome</keyword>
<keyword id="KW-0812">Transmembrane</keyword>
<keyword id="KW-1133">Transmembrane helix</keyword>
<comment type="subcellular location">
    <subcellularLocation>
        <location evidence="2">Membrane</location>
        <topology evidence="2">Single-pass membrane protein</topology>
    </subcellularLocation>
</comment>
<reference key="1">
    <citation type="journal article" date="1997" name="Nature">
        <title>Genomic sequence of a Lyme disease spirochaete, Borrelia burgdorferi.</title>
        <authorList>
            <person name="Fraser C.M."/>
            <person name="Casjens S."/>
            <person name="Huang W.M."/>
            <person name="Sutton G.G."/>
            <person name="Clayton R.A."/>
            <person name="Lathigra R."/>
            <person name="White O."/>
            <person name="Ketchum K.A."/>
            <person name="Dodson R.J."/>
            <person name="Hickey E.K."/>
            <person name="Gwinn M.L."/>
            <person name="Dougherty B.A."/>
            <person name="Tomb J.-F."/>
            <person name="Fleischmann R.D."/>
            <person name="Richardson D.L."/>
            <person name="Peterson J.D."/>
            <person name="Kerlavage A.R."/>
            <person name="Quackenbush J."/>
            <person name="Salzberg S.L."/>
            <person name="Hanson M."/>
            <person name="van Vugt R."/>
            <person name="Palmer N."/>
            <person name="Adams M.D."/>
            <person name="Gocayne J.D."/>
            <person name="Weidman J.F."/>
            <person name="Utterback T.R."/>
            <person name="Watthey L."/>
            <person name="McDonald L.A."/>
            <person name="Artiach P."/>
            <person name="Bowman C."/>
            <person name="Garland S.A."/>
            <person name="Fujii C."/>
            <person name="Cotton M.D."/>
            <person name="Horst K."/>
            <person name="Roberts K.M."/>
            <person name="Hatch B."/>
            <person name="Smith H.O."/>
            <person name="Venter J.C."/>
        </authorList>
    </citation>
    <scope>NUCLEOTIDE SEQUENCE [LARGE SCALE GENOMIC DNA]</scope>
    <source>
        <strain>ATCC 35210 / DSM 4680 / CIP 102532 / B31</strain>
    </source>
</reference>
<accession>O51058</accession>
<feature type="chain" id="PRO_0000174369" description="Uncharacterized protein BB_0027">
    <location>
        <begin position="1"/>
        <end position="212"/>
    </location>
</feature>
<feature type="transmembrane region" description="Helical" evidence="1">
    <location>
        <begin position="5"/>
        <end position="25"/>
    </location>
</feature>
<gene>
    <name type="ordered locus">BB_0027</name>
</gene>
<evidence type="ECO:0000255" key="1"/>
<evidence type="ECO:0000305" key="2"/>
<dbReference type="EMBL" id="AE000783">
    <property type="protein sequence ID" value="AAC66429.1"/>
    <property type="molecule type" value="Genomic_DNA"/>
</dbReference>
<dbReference type="PIR" id="C70103">
    <property type="entry name" value="C70103"/>
</dbReference>
<dbReference type="RefSeq" id="NP_212161.1">
    <property type="nucleotide sequence ID" value="NC_001318.1"/>
</dbReference>
<dbReference type="RefSeq" id="WP_002658348.1">
    <property type="nucleotide sequence ID" value="NC_001318.1"/>
</dbReference>
<dbReference type="STRING" id="224326.BB_0027"/>
<dbReference type="PaxDb" id="224326-BB_0027"/>
<dbReference type="EnsemblBacteria" id="AAC66429">
    <property type="protein sequence ID" value="AAC66429"/>
    <property type="gene ID" value="BB_0027"/>
</dbReference>
<dbReference type="KEGG" id="bbu:BB_0027"/>
<dbReference type="PATRIC" id="fig|224326.49.peg.426"/>
<dbReference type="HOGENOM" id="CLU_1286719_0_0_12"/>
<dbReference type="OrthoDB" id="350398at2"/>
<dbReference type="Proteomes" id="UP000001807">
    <property type="component" value="Chromosome"/>
</dbReference>
<dbReference type="GO" id="GO:0016020">
    <property type="term" value="C:membrane"/>
    <property type="evidence" value="ECO:0007669"/>
    <property type="project" value="UniProtKB-SubCell"/>
</dbReference>
<dbReference type="NCBIfam" id="NF047327">
    <property type="entry name" value="OMP_BB0027"/>
    <property type="match status" value="1"/>
</dbReference>
<name>Y027_BORBU</name>
<organism>
    <name type="scientific">Borreliella burgdorferi (strain ATCC 35210 / DSM 4680 / CIP 102532 / B31)</name>
    <name type="common">Borrelia burgdorferi</name>
    <dbReference type="NCBI Taxonomy" id="224326"/>
    <lineage>
        <taxon>Bacteria</taxon>
        <taxon>Pseudomonadati</taxon>
        <taxon>Spirochaetota</taxon>
        <taxon>Spirochaetia</taxon>
        <taxon>Spirochaetales</taxon>
        <taxon>Borreliaceae</taxon>
        <taxon>Borreliella</taxon>
    </lineage>
</organism>
<proteinExistence type="predicted"/>
<protein>
    <recommendedName>
        <fullName>Uncharacterized protein BB_0027</fullName>
    </recommendedName>
</protein>